<sequence length="397" mass="43706">MGKAKFERSKPHVNIGTIGHVDHGKTTLTAAITITMHNRYGTGGAVAFDMIDKAPEERERGITISTAHVEYETDKRHYAHVDCPGHADYVKNMITGAAQMDGAILVCSAADGPMPQTREHILLSRQVGVPYIVVFLNKCDMVDDEELLELVEMEVRDLLNMYEFPGDDTPVIMGSALKALEDPAGPWGDKIVELFDAIDTWIPEPVRDTDKPFLMPVEDVFSITGRGTVATGRIERGIVKVQEEISLVGLSEAPRKLVVTGVEMFRKLLDQGQAGDNVGILLRGIQRDEIERGQVLAKTGSIQPHTKFMAEVYVLKKEEGGRHTPFFDGYRPQFYFRTTDVTGSIKLPEGVEMVMPGDNITMEIELISPIATEEGLRFAIREGGRTVGAGVVASIIE</sequence>
<dbReference type="EC" id="3.6.5.3" evidence="2"/>
<dbReference type="EMBL" id="CP000724">
    <property type="protein sequence ID" value="ABR50552.1"/>
    <property type="molecule type" value="Genomic_DNA"/>
</dbReference>
<dbReference type="RefSeq" id="WP_012065443.1">
    <property type="nucleotide sequence ID" value="NC_009633.1"/>
</dbReference>
<dbReference type="SMR" id="A6TWI4"/>
<dbReference type="STRING" id="293826.Amet_4480"/>
<dbReference type="KEGG" id="amt:Amet_4480"/>
<dbReference type="eggNOG" id="COG0050">
    <property type="taxonomic scope" value="Bacteria"/>
</dbReference>
<dbReference type="HOGENOM" id="CLU_007265_0_1_9"/>
<dbReference type="OrthoDB" id="9804504at2"/>
<dbReference type="Proteomes" id="UP000001572">
    <property type="component" value="Chromosome"/>
</dbReference>
<dbReference type="GO" id="GO:0005829">
    <property type="term" value="C:cytosol"/>
    <property type="evidence" value="ECO:0007669"/>
    <property type="project" value="TreeGrafter"/>
</dbReference>
<dbReference type="GO" id="GO:0005525">
    <property type="term" value="F:GTP binding"/>
    <property type="evidence" value="ECO:0007669"/>
    <property type="project" value="UniProtKB-UniRule"/>
</dbReference>
<dbReference type="GO" id="GO:0003924">
    <property type="term" value="F:GTPase activity"/>
    <property type="evidence" value="ECO:0007669"/>
    <property type="project" value="InterPro"/>
</dbReference>
<dbReference type="GO" id="GO:0003746">
    <property type="term" value="F:translation elongation factor activity"/>
    <property type="evidence" value="ECO:0007669"/>
    <property type="project" value="UniProtKB-UniRule"/>
</dbReference>
<dbReference type="CDD" id="cd01884">
    <property type="entry name" value="EF_Tu"/>
    <property type="match status" value="1"/>
</dbReference>
<dbReference type="CDD" id="cd03697">
    <property type="entry name" value="EFTU_II"/>
    <property type="match status" value="1"/>
</dbReference>
<dbReference type="CDD" id="cd03707">
    <property type="entry name" value="EFTU_III"/>
    <property type="match status" value="1"/>
</dbReference>
<dbReference type="FunFam" id="2.40.30.10:FF:000001">
    <property type="entry name" value="Elongation factor Tu"/>
    <property type="match status" value="1"/>
</dbReference>
<dbReference type="FunFam" id="3.40.50.300:FF:000003">
    <property type="entry name" value="Elongation factor Tu"/>
    <property type="match status" value="1"/>
</dbReference>
<dbReference type="Gene3D" id="3.40.50.300">
    <property type="entry name" value="P-loop containing nucleotide triphosphate hydrolases"/>
    <property type="match status" value="1"/>
</dbReference>
<dbReference type="Gene3D" id="2.40.30.10">
    <property type="entry name" value="Translation factors"/>
    <property type="match status" value="2"/>
</dbReference>
<dbReference type="HAMAP" id="MF_00118_B">
    <property type="entry name" value="EF_Tu_B"/>
    <property type="match status" value="1"/>
</dbReference>
<dbReference type="InterPro" id="IPR041709">
    <property type="entry name" value="EF-Tu_GTP-bd"/>
</dbReference>
<dbReference type="InterPro" id="IPR050055">
    <property type="entry name" value="EF-Tu_GTPase"/>
</dbReference>
<dbReference type="InterPro" id="IPR004161">
    <property type="entry name" value="EFTu-like_2"/>
</dbReference>
<dbReference type="InterPro" id="IPR033720">
    <property type="entry name" value="EFTU_2"/>
</dbReference>
<dbReference type="InterPro" id="IPR031157">
    <property type="entry name" value="G_TR_CS"/>
</dbReference>
<dbReference type="InterPro" id="IPR027417">
    <property type="entry name" value="P-loop_NTPase"/>
</dbReference>
<dbReference type="InterPro" id="IPR005225">
    <property type="entry name" value="Small_GTP-bd"/>
</dbReference>
<dbReference type="InterPro" id="IPR000795">
    <property type="entry name" value="T_Tr_GTP-bd_dom"/>
</dbReference>
<dbReference type="InterPro" id="IPR009000">
    <property type="entry name" value="Transl_B-barrel_sf"/>
</dbReference>
<dbReference type="InterPro" id="IPR009001">
    <property type="entry name" value="Transl_elong_EF1A/Init_IF2_C"/>
</dbReference>
<dbReference type="InterPro" id="IPR004541">
    <property type="entry name" value="Transl_elong_EFTu/EF1A_bac/org"/>
</dbReference>
<dbReference type="InterPro" id="IPR004160">
    <property type="entry name" value="Transl_elong_EFTu/EF1A_C"/>
</dbReference>
<dbReference type="NCBIfam" id="TIGR00485">
    <property type="entry name" value="EF-Tu"/>
    <property type="match status" value="1"/>
</dbReference>
<dbReference type="NCBIfam" id="NF000766">
    <property type="entry name" value="PRK00049.1"/>
    <property type="match status" value="1"/>
</dbReference>
<dbReference type="NCBIfam" id="NF009372">
    <property type="entry name" value="PRK12735.1"/>
    <property type="match status" value="1"/>
</dbReference>
<dbReference type="NCBIfam" id="NF009373">
    <property type="entry name" value="PRK12736.1"/>
    <property type="match status" value="1"/>
</dbReference>
<dbReference type="NCBIfam" id="TIGR00231">
    <property type="entry name" value="small_GTP"/>
    <property type="match status" value="1"/>
</dbReference>
<dbReference type="PANTHER" id="PTHR43721:SF22">
    <property type="entry name" value="ELONGATION FACTOR TU, MITOCHONDRIAL"/>
    <property type="match status" value="1"/>
</dbReference>
<dbReference type="PANTHER" id="PTHR43721">
    <property type="entry name" value="ELONGATION FACTOR TU-RELATED"/>
    <property type="match status" value="1"/>
</dbReference>
<dbReference type="Pfam" id="PF00009">
    <property type="entry name" value="GTP_EFTU"/>
    <property type="match status" value="1"/>
</dbReference>
<dbReference type="Pfam" id="PF03144">
    <property type="entry name" value="GTP_EFTU_D2"/>
    <property type="match status" value="1"/>
</dbReference>
<dbReference type="Pfam" id="PF03143">
    <property type="entry name" value="GTP_EFTU_D3"/>
    <property type="match status" value="1"/>
</dbReference>
<dbReference type="PRINTS" id="PR00315">
    <property type="entry name" value="ELONGATNFCT"/>
</dbReference>
<dbReference type="SUPFAM" id="SSF50465">
    <property type="entry name" value="EF-Tu/eEF-1alpha/eIF2-gamma C-terminal domain"/>
    <property type="match status" value="1"/>
</dbReference>
<dbReference type="SUPFAM" id="SSF52540">
    <property type="entry name" value="P-loop containing nucleoside triphosphate hydrolases"/>
    <property type="match status" value="1"/>
</dbReference>
<dbReference type="SUPFAM" id="SSF50447">
    <property type="entry name" value="Translation proteins"/>
    <property type="match status" value="1"/>
</dbReference>
<dbReference type="PROSITE" id="PS00301">
    <property type="entry name" value="G_TR_1"/>
    <property type="match status" value="1"/>
</dbReference>
<dbReference type="PROSITE" id="PS51722">
    <property type="entry name" value="G_TR_2"/>
    <property type="match status" value="1"/>
</dbReference>
<gene>
    <name evidence="2" type="primary">tuf1</name>
    <name type="ordered locus">Amet_4480</name>
</gene>
<comment type="function">
    <text evidence="2">GTP hydrolase that promotes the GTP-dependent binding of aminoacyl-tRNA to the A-site of ribosomes during protein biosynthesis.</text>
</comment>
<comment type="catalytic activity">
    <reaction evidence="2">
        <text>GTP + H2O = GDP + phosphate + H(+)</text>
        <dbReference type="Rhea" id="RHEA:19669"/>
        <dbReference type="ChEBI" id="CHEBI:15377"/>
        <dbReference type="ChEBI" id="CHEBI:15378"/>
        <dbReference type="ChEBI" id="CHEBI:37565"/>
        <dbReference type="ChEBI" id="CHEBI:43474"/>
        <dbReference type="ChEBI" id="CHEBI:58189"/>
        <dbReference type="EC" id="3.6.5.3"/>
    </reaction>
    <physiologicalReaction direction="left-to-right" evidence="2">
        <dbReference type="Rhea" id="RHEA:19670"/>
    </physiologicalReaction>
</comment>
<comment type="subunit">
    <text evidence="2">Monomer.</text>
</comment>
<comment type="subcellular location">
    <subcellularLocation>
        <location evidence="2">Cytoplasm</location>
    </subcellularLocation>
</comment>
<comment type="similarity">
    <text evidence="2">Belongs to the TRAFAC class translation factor GTPase superfamily. Classic translation factor GTPase family. EF-Tu/EF-1A subfamily.</text>
</comment>
<organism>
    <name type="scientific">Alkaliphilus metalliredigens (strain QYMF)</name>
    <dbReference type="NCBI Taxonomy" id="293826"/>
    <lineage>
        <taxon>Bacteria</taxon>
        <taxon>Bacillati</taxon>
        <taxon>Bacillota</taxon>
        <taxon>Clostridia</taxon>
        <taxon>Peptostreptococcales</taxon>
        <taxon>Natronincolaceae</taxon>
        <taxon>Alkaliphilus</taxon>
    </lineage>
</organism>
<accession>A6TWI4</accession>
<reference key="1">
    <citation type="journal article" date="2016" name="Genome Announc.">
        <title>Complete genome sequence of Alkaliphilus metalliredigens strain QYMF, an alkaliphilic and metal-reducing bacterium isolated from borax-contaminated leachate ponds.</title>
        <authorList>
            <person name="Hwang C."/>
            <person name="Copeland A."/>
            <person name="Lucas S."/>
            <person name="Lapidus A."/>
            <person name="Barry K."/>
            <person name="Detter J.C."/>
            <person name="Glavina Del Rio T."/>
            <person name="Hammon N."/>
            <person name="Israni S."/>
            <person name="Dalin E."/>
            <person name="Tice H."/>
            <person name="Pitluck S."/>
            <person name="Chertkov O."/>
            <person name="Brettin T."/>
            <person name="Bruce D."/>
            <person name="Han C."/>
            <person name="Schmutz J."/>
            <person name="Larimer F."/>
            <person name="Land M.L."/>
            <person name="Hauser L."/>
            <person name="Kyrpides N."/>
            <person name="Mikhailova N."/>
            <person name="Ye Q."/>
            <person name="Zhou J."/>
            <person name="Richardson P."/>
            <person name="Fields M.W."/>
        </authorList>
    </citation>
    <scope>NUCLEOTIDE SEQUENCE [LARGE SCALE GENOMIC DNA]</scope>
    <source>
        <strain>QYMF</strain>
    </source>
</reference>
<evidence type="ECO:0000250" key="1"/>
<evidence type="ECO:0000255" key="2">
    <source>
        <dbReference type="HAMAP-Rule" id="MF_00118"/>
    </source>
</evidence>
<proteinExistence type="inferred from homology"/>
<keyword id="KW-0963">Cytoplasm</keyword>
<keyword id="KW-0251">Elongation factor</keyword>
<keyword id="KW-0342">GTP-binding</keyword>
<keyword id="KW-0378">Hydrolase</keyword>
<keyword id="KW-0460">Magnesium</keyword>
<keyword id="KW-0479">Metal-binding</keyword>
<keyword id="KW-0547">Nucleotide-binding</keyword>
<keyword id="KW-0648">Protein biosynthesis</keyword>
<keyword id="KW-1185">Reference proteome</keyword>
<protein>
    <recommendedName>
        <fullName evidence="2">Elongation factor Tu 1</fullName>
        <shortName evidence="2">EF-Tu 1</shortName>
        <ecNumber evidence="2">3.6.5.3</ecNumber>
    </recommendedName>
</protein>
<feature type="chain" id="PRO_0000337310" description="Elongation factor Tu 1">
    <location>
        <begin position="1"/>
        <end position="397"/>
    </location>
</feature>
<feature type="domain" description="tr-type G">
    <location>
        <begin position="10"/>
        <end position="206"/>
    </location>
</feature>
<feature type="region of interest" description="G1" evidence="1">
    <location>
        <begin position="19"/>
        <end position="26"/>
    </location>
</feature>
<feature type="region of interest" description="G2" evidence="1">
    <location>
        <begin position="61"/>
        <end position="65"/>
    </location>
</feature>
<feature type="region of interest" description="G3" evidence="1">
    <location>
        <begin position="82"/>
        <end position="85"/>
    </location>
</feature>
<feature type="region of interest" description="G4" evidence="1">
    <location>
        <begin position="137"/>
        <end position="140"/>
    </location>
</feature>
<feature type="region of interest" description="G5" evidence="1">
    <location>
        <begin position="175"/>
        <end position="177"/>
    </location>
</feature>
<feature type="binding site" evidence="2">
    <location>
        <begin position="19"/>
        <end position="26"/>
    </location>
    <ligand>
        <name>GTP</name>
        <dbReference type="ChEBI" id="CHEBI:37565"/>
    </ligand>
</feature>
<feature type="binding site" evidence="2">
    <location>
        <position position="26"/>
    </location>
    <ligand>
        <name>Mg(2+)</name>
        <dbReference type="ChEBI" id="CHEBI:18420"/>
    </ligand>
</feature>
<feature type="binding site" evidence="2">
    <location>
        <begin position="82"/>
        <end position="86"/>
    </location>
    <ligand>
        <name>GTP</name>
        <dbReference type="ChEBI" id="CHEBI:37565"/>
    </ligand>
</feature>
<feature type="binding site" evidence="2">
    <location>
        <begin position="137"/>
        <end position="140"/>
    </location>
    <ligand>
        <name>GTP</name>
        <dbReference type="ChEBI" id="CHEBI:37565"/>
    </ligand>
</feature>
<name>EFTU1_ALKMQ</name>